<sequence>MSKVAAVLKVMPDSPDIDLDGLEADLSESLPDGAEINGTDTEEVAFGLTALLTTVIVPDDSGGTEAVEDAFGAVDDVESVSVEEVGRL</sequence>
<feature type="chain" id="PRO_0000155056" description="Elongation factor 1-beta">
    <location>
        <begin position="1"/>
        <end position="88"/>
    </location>
</feature>
<gene>
    <name type="primary">ef1b</name>
    <name type="ordered locus">VNG_1173G</name>
</gene>
<evidence type="ECO:0000250" key="1"/>
<evidence type="ECO:0000305" key="2"/>
<accession>Q9HQG6</accession>
<keyword id="KW-0251">Elongation factor</keyword>
<keyword id="KW-0648">Protein biosynthesis</keyword>
<keyword id="KW-1185">Reference proteome</keyword>
<dbReference type="EMBL" id="AE004437">
    <property type="protein sequence ID" value="AAG19549.1"/>
    <property type="status" value="ALT_INIT"/>
    <property type="molecule type" value="Genomic_DNA"/>
</dbReference>
<dbReference type="PIR" id="A84273">
    <property type="entry name" value="A84273"/>
</dbReference>
<dbReference type="RefSeq" id="WP_012289285.1">
    <property type="nucleotide sequence ID" value="NC_002607.1"/>
</dbReference>
<dbReference type="SMR" id="Q9HQG6"/>
<dbReference type="FunCoup" id="Q9HQG6">
    <property type="interactions" value="5"/>
</dbReference>
<dbReference type="STRING" id="64091.VNG_1173G"/>
<dbReference type="PaxDb" id="64091-VNG_1173G"/>
<dbReference type="KEGG" id="hal:VNG_1173G"/>
<dbReference type="PATRIC" id="fig|64091.14.peg.897"/>
<dbReference type="HOGENOM" id="CLU_165896_0_0_2"/>
<dbReference type="InParanoid" id="Q9HQG6"/>
<dbReference type="OrthoDB" id="84643at2157"/>
<dbReference type="PhylomeDB" id="Q9HQG6"/>
<dbReference type="Proteomes" id="UP000000554">
    <property type="component" value="Chromosome"/>
</dbReference>
<dbReference type="GO" id="GO:0003746">
    <property type="term" value="F:translation elongation factor activity"/>
    <property type="evidence" value="ECO:0007669"/>
    <property type="project" value="UniProtKB-UniRule"/>
</dbReference>
<dbReference type="CDD" id="cd00292">
    <property type="entry name" value="EF1B"/>
    <property type="match status" value="1"/>
</dbReference>
<dbReference type="Gene3D" id="3.30.70.60">
    <property type="match status" value="1"/>
</dbReference>
<dbReference type="HAMAP" id="MF_00043">
    <property type="entry name" value="EF1_beta"/>
    <property type="match status" value="1"/>
</dbReference>
<dbReference type="InterPro" id="IPR036219">
    <property type="entry name" value="eEF-1beta-like_sf"/>
</dbReference>
<dbReference type="InterPro" id="IPR014038">
    <property type="entry name" value="EF1B_bsu/dsu_GNE"/>
</dbReference>
<dbReference type="InterPro" id="IPR014717">
    <property type="entry name" value="Transl_elong_EF1B/ribsomal_bS6"/>
</dbReference>
<dbReference type="InterPro" id="IPR004542">
    <property type="entry name" value="Transl_elong_EF1B_B_arc"/>
</dbReference>
<dbReference type="NCBIfam" id="TIGR00489">
    <property type="entry name" value="aEF-1_beta"/>
    <property type="match status" value="1"/>
</dbReference>
<dbReference type="NCBIfam" id="NF001670">
    <property type="entry name" value="PRK00435.1"/>
    <property type="match status" value="1"/>
</dbReference>
<dbReference type="PANTHER" id="PTHR39647">
    <property type="entry name" value="ELONGATION FACTOR 1-BETA"/>
    <property type="match status" value="1"/>
</dbReference>
<dbReference type="PANTHER" id="PTHR39647:SF1">
    <property type="entry name" value="ELONGATION FACTOR 1-BETA"/>
    <property type="match status" value="1"/>
</dbReference>
<dbReference type="Pfam" id="PF00736">
    <property type="entry name" value="EF1_GNE"/>
    <property type="match status" value="1"/>
</dbReference>
<dbReference type="PIRSF" id="PIRSF006521">
    <property type="entry name" value="Transl_elong_EF1B_B_arc"/>
    <property type="match status" value="1"/>
</dbReference>
<dbReference type="SMART" id="SM00888">
    <property type="entry name" value="EF1_GNE"/>
    <property type="match status" value="1"/>
</dbReference>
<dbReference type="SUPFAM" id="SSF54984">
    <property type="entry name" value="eEF-1beta-like"/>
    <property type="match status" value="1"/>
</dbReference>
<protein>
    <recommendedName>
        <fullName>Elongation factor 1-beta</fullName>
        <shortName>EF-1-beta</shortName>
    </recommendedName>
    <alternativeName>
        <fullName>aEF-1beta</fullName>
    </alternativeName>
</protein>
<comment type="function">
    <text evidence="1">Promotes the exchange of GDP for GTP in EF-1-alpha/GDP, thus allowing the regeneration of EF-1-alpha/GTP that could then be used to form the ternary complex EF-1-alpha/GTP/AAtRNA.</text>
</comment>
<comment type="similarity">
    <text evidence="2">Belongs to the EF-1-beta/EF-1-delta family.</text>
</comment>
<comment type="sequence caution" evidence="2">
    <conflict type="erroneous initiation">
        <sequence resource="EMBL-CDS" id="AAG19549"/>
    </conflict>
</comment>
<organism>
    <name type="scientific">Halobacterium salinarum (strain ATCC 700922 / JCM 11081 / NRC-1)</name>
    <name type="common">Halobacterium halobium</name>
    <dbReference type="NCBI Taxonomy" id="64091"/>
    <lineage>
        <taxon>Archaea</taxon>
        <taxon>Methanobacteriati</taxon>
        <taxon>Methanobacteriota</taxon>
        <taxon>Stenosarchaea group</taxon>
        <taxon>Halobacteria</taxon>
        <taxon>Halobacteriales</taxon>
        <taxon>Halobacteriaceae</taxon>
        <taxon>Halobacterium</taxon>
        <taxon>Halobacterium salinarum NRC-34001</taxon>
    </lineage>
</organism>
<name>EF1B_HALSA</name>
<reference key="1">
    <citation type="journal article" date="2000" name="Proc. Natl. Acad. Sci. U.S.A.">
        <title>Genome sequence of Halobacterium species NRC-1.</title>
        <authorList>
            <person name="Ng W.V."/>
            <person name="Kennedy S.P."/>
            <person name="Mahairas G.G."/>
            <person name="Berquist B."/>
            <person name="Pan M."/>
            <person name="Shukla H.D."/>
            <person name="Lasky S.R."/>
            <person name="Baliga N.S."/>
            <person name="Thorsson V."/>
            <person name="Sbrogna J."/>
            <person name="Swartzell S."/>
            <person name="Weir D."/>
            <person name="Hall J."/>
            <person name="Dahl T.A."/>
            <person name="Welti R."/>
            <person name="Goo Y.A."/>
            <person name="Leithauser B."/>
            <person name="Keller K."/>
            <person name="Cruz R."/>
            <person name="Danson M.J."/>
            <person name="Hough D.W."/>
            <person name="Maddocks D.G."/>
            <person name="Jablonski P.E."/>
            <person name="Krebs M.P."/>
            <person name="Angevine C.M."/>
            <person name="Dale H."/>
            <person name="Isenbarger T.A."/>
            <person name="Peck R.F."/>
            <person name="Pohlschroder M."/>
            <person name="Spudich J.L."/>
            <person name="Jung K.-H."/>
            <person name="Alam M."/>
            <person name="Freitas T."/>
            <person name="Hou S."/>
            <person name="Daniels C.J."/>
            <person name="Dennis P.P."/>
            <person name="Omer A.D."/>
            <person name="Ebhardt H."/>
            <person name="Lowe T.M."/>
            <person name="Liang P."/>
            <person name="Riley M."/>
            <person name="Hood L."/>
            <person name="DasSarma S."/>
        </authorList>
    </citation>
    <scope>NUCLEOTIDE SEQUENCE [LARGE SCALE GENOMIC DNA]</scope>
    <source>
        <strain>ATCC 700922 / JCM 11081 / NRC-1</strain>
    </source>
</reference>
<proteinExistence type="inferred from homology"/>